<keyword id="KW-0963">Cytoplasm</keyword>
<keyword id="KW-0275">Fatty acid biosynthesis</keyword>
<keyword id="KW-0276">Fatty acid metabolism</keyword>
<keyword id="KW-0444">Lipid biosynthesis</keyword>
<keyword id="KW-0443">Lipid metabolism</keyword>
<keyword id="KW-0596">Phosphopantetheine</keyword>
<keyword id="KW-0597">Phosphoprotein</keyword>
<keyword id="KW-1185">Reference proteome</keyword>
<protein>
    <recommendedName>
        <fullName evidence="1">Acyl carrier protein</fullName>
        <shortName evidence="1">ACP</shortName>
    </recommendedName>
</protein>
<proteinExistence type="inferred from homology"/>
<dbReference type="EMBL" id="CP000872">
    <property type="protein sequence ID" value="ABX61546.1"/>
    <property type="molecule type" value="Genomic_DNA"/>
</dbReference>
<dbReference type="RefSeq" id="WP_002963616.1">
    <property type="nucleotide sequence ID" value="NC_010103.1"/>
</dbReference>
<dbReference type="BMRB" id="A9M8Y2"/>
<dbReference type="SMR" id="A9M8Y2"/>
<dbReference type="KEGG" id="bcs:BCAN_A0464"/>
<dbReference type="HOGENOM" id="CLU_108696_5_1_5"/>
<dbReference type="UniPathway" id="UPA00094"/>
<dbReference type="Proteomes" id="UP000001385">
    <property type="component" value="Chromosome I"/>
</dbReference>
<dbReference type="GO" id="GO:0005829">
    <property type="term" value="C:cytosol"/>
    <property type="evidence" value="ECO:0007669"/>
    <property type="project" value="TreeGrafter"/>
</dbReference>
<dbReference type="GO" id="GO:0016020">
    <property type="term" value="C:membrane"/>
    <property type="evidence" value="ECO:0007669"/>
    <property type="project" value="GOC"/>
</dbReference>
<dbReference type="GO" id="GO:0000035">
    <property type="term" value="F:acyl binding"/>
    <property type="evidence" value="ECO:0007669"/>
    <property type="project" value="TreeGrafter"/>
</dbReference>
<dbReference type="GO" id="GO:0000036">
    <property type="term" value="F:acyl carrier activity"/>
    <property type="evidence" value="ECO:0007669"/>
    <property type="project" value="UniProtKB-UniRule"/>
</dbReference>
<dbReference type="GO" id="GO:0031177">
    <property type="term" value="F:phosphopantetheine binding"/>
    <property type="evidence" value="ECO:0007669"/>
    <property type="project" value="InterPro"/>
</dbReference>
<dbReference type="GO" id="GO:0009245">
    <property type="term" value="P:lipid A biosynthetic process"/>
    <property type="evidence" value="ECO:0007669"/>
    <property type="project" value="TreeGrafter"/>
</dbReference>
<dbReference type="FunFam" id="1.10.1200.10:FF:000001">
    <property type="entry name" value="Acyl carrier protein"/>
    <property type="match status" value="1"/>
</dbReference>
<dbReference type="Gene3D" id="1.10.1200.10">
    <property type="entry name" value="ACP-like"/>
    <property type="match status" value="1"/>
</dbReference>
<dbReference type="HAMAP" id="MF_01217">
    <property type="entry name" value="Acyl_carrier"/>
    <property type="match status" value="1"/>
</dbReference>
<dbReference type="InterPro" id="IPR003231">
    <property type="entry name" value="ACP"/>
</dbReference>
<dbReference type="InterPro" id="IPR036736">
    <property type="entry name" value="ACP-like_sf"/>
</dbReference>
<dbReference type="InterPro" id="IPR020806">
    <property type="entry name" value="PKS_PP-bd"/>
</dbReference>
<dbReference type="InterPro" id="IPR009081">
    <property type="entry name" value="PP-bd_ACP"/>
</dbReference>
<dbReference type="InterPro" id="IPR006162">
    <property type="entry name" value="Ppantetheine_attach_site"/>
</dbReference>
<dbReference type="NCBIfam" id="TIGR00517">
    <property type="entry name" value="acyl_carrier"/>
    <property type="match status" value="1"/>
</dbReference>
<dbReference type="NCBIfam" id="NF002148">
    <property type="entry name" value="PRK00982.1-2"/>
    <property type="match status" value="1"/>
</dbReference>
<dbReference type="NCBIfam" id="NF002149">
    <property type="entry name" value="PRK00982.1-3"/>
    <property type="match status" value="1"/>
</dbReference>
<dbReference type="NCBIfam" id="NF002150">
    <property type="entry name" value="PRK00982.1-4"/>
    <property type="match status" value="1"/>
</dbReference>
<dbReference type="NCBIfam" id="NF002151">
    <property type="entry name" value="PRK00982.1-5"/>
    <property type="match status" value="1"/>
</dbReference>
<dbReference type="PANTHER" id="PTHR20863">
    <property type="entry name" value="ACYL CARRIER PROTEIN"/>
    <property type="match status" value="1"/>
</dbReference>
<dbReference type="PANTHER" id="PTHR20863:SF76">
    <property type="entry name" value="CARRIER DOMAIN-CONTAINING PROTEIN"/>
    <property type="match status" value="1"/>
</dbReference>
<dbReference type="Pfam" id="PF00550">
    <property type="entry name" value="PP-binding"/>
    <property type="match status" value="1"/>
</dbReference>
<dbReference type="SMART" id="SM00823">
    <property type="entry name" value="PKS_PP"/>
    <property type="match status" value="1"/>
</dbReference>
<dbReference type="SUPFAM" id="SSF47336">
    <property type="entry name" value="ACP-like"/>
    <property type="match status" value="1"/>
</dbReference>
<dbReference type="PROSITE" id="PS50075">
    <property type="entry name" value="CARRIER"/>
    <property type="match status" value="1"/>
</dbReference>
<dbReference type="PROSITE" id="PS00012">
    <property type="entry name" value="PHOSPHOPANTETHEINE"/>
    <property type="match status" value="1"/>
</dbReference>
<comment type="function">
    <text evidence="1">Carrier of the growing fatty acid chain in fatty acid biosynthesis.</text>
</comment>
<comment type="pathway">
    <text evidence="1">Lipid metabolism; fatty acid biosynthesis.</text>
</comment>
<comment type="subcellular location">
    <subcellularLocation>
        <location evidence="1">Cytoplasm</location>
    </subcellularLocation>
</comment>
<comment type="PTM">
    <text evidence="1">4'-phosphopantetheine is transferred from CoA to a specific serine of apo-ACP by AcpS. This modification is essential for activity because fatty acids are bound in thioester linkage to the sulfhydryl of the prosthetic group.</text>
</comment>
<comment type="similarity">
    <text evidence="1">Belongs to the acyl carrier protein (ACP) family.</text>
</comment>
<reference key="1">
    <citation type="submission" date="2007-10" db="EMBL/GenBank/DDBJ databases">
        <title>Brucella canis ATCC 23365 whole genome shotgun sequencing project.</title>
        <authorList>
            <person name="Setubal J.C."/>
            <person name="Bowns C."/>
            <person name="Boyle S."/>
            <person name="Crasta O.R."/>
            <person name="Czar M.J."/>
            <person name="Dharmanolla C."/>
            <person name="Gillespie J.J."/>
            <person name="Kenyon R.W."/>
            <person name="Lu J."/>
            <person name="Mane S."/>
            <person name="Mohapatra S."/>
            <person name="Nagrani S."/>
            <person name="Purkayastha A."/>
            <person name="Rajasimha H.K."/>
            <person name="Shallom J.M."/>
            <person name="Shallom S."/>
            <person name="Shukla M."/>
            <person name="Snyder E.E."/>
            <person name="Sobral B.W."/>
            <person name="Wattam A.R."/>
            <person name="Will R."/>
            <person name="Williams K."/>
            <person name="Yoo H."/>
            <person name="Bruce D."/>
            <person name="Detter C."/>
            <person name="Munk C."/>
            <person name="Brettin T.S."/>
        </authorList>
    </citation>
    <scope>NUCLEOTIDE SEQUENCE [LARGE SCALE GENOMIC DNA]</scope>
    <source>
        <strain>ATCC 23365 / NCTC 10854 / RM-666</strain>
    </source>
</reference>
<organism>
    <name type="scientific">Brucella canis (strain ATCC 23365 / NCTC 10854 / RM-666)</name>
    <dbReference type="NCBI Taxonomy" id="483179"/>
    <lineage>
        <taxon>Bacteria</taxon>
        <taxon>Pseudomonadati</taxon>
        <taxon>Pseudomonadota</taxon>
        <taxon>Alphaproteobacteria</taxon>
        <taxon>Hyphomicrobiales</taxon>
        <taxon>Brucellaceae</taxon>
        <taxon>Brucella/Ochrobactrum group</taxon>
        <taxon>Brucella</taxon>
    </lineage>
</organism>
<accession>A9M8Y2</accession>
<sequence length="78" mass="8301">MSDTAERVKKIVVEHLGVDADKVTEGASFIDDLGADSLDTVELVMAFEEEFGVEIPDDAAETILTVGDAVKFIDKASA</sequence>
<gene>
    <name evidence="1" type="primary">acpP</name>
    <name type="ordered locus">BCAN_A0464</name>
</gene>
<name>ACP_BRUC2</name>
<feature type="chain" id="PRO_1000085595" description="Acyl carrier protein">
    <location>
        <begin position="1"/>
        <end position="78"/>
    </location>
</feature>
<feature type="domain" description="Carrier" evidence="2">
    <location>
        <begin position="2"/>
        <end position="77"/>
    </location>
</feature>
<feature type="modified residue" description="O-(pantetheine 4'-phosphoryl)serine" evidence="2">
    <location>
        <position position="37"/>
    </location>
</feature>
<evidence type="ECO:0000255" key="1">
    <source>
        <dbReference type="HAMAP-Rule" id="MF_01217"/>
    </source>
</evidence>
<evidence type="ECO:0000255" key="2">
    <source>
        <dbReference type="PROSITE-ProRule" id="PRU00258"/>
    </source>
</evidence>